<dbReference type="EMBL" id="AE000792">
    <property type="protein sequence ID" value="AAC66335.1"/>
    <property type="molecule type" value="Genomic_DNA"/>
</dbReference>
<dbReference type="PIR" id="H70219">
    <property type="entry name" value="H70219"/>
</dbReference>
<dbReference type="RefSeq" id="NP_047014.1">
    <property type="nucleotide sequence ID" value="NC_001903.1"/>
</dbReference>
<dbReference type="RefSeq" id="WP_010890598.1">
    <property type="nucleotide sequence ID" value="NC_001903.1"/>
</dbReference>
<dbReference type="SMR" id="O50999"/>
<dbReference type="EnsemblBacteria" id="AAC66335">
    <property type="protein sequence ID" value="AAC66335"/>
    <property type="gene ID" value="BB_B28"/>
</dbReference>
<dbReference type="KEGG" id="bbu:BB_B28"/>
<dbReference type="PATRIC" id="fig|224326.49.peg.1615"/>
<dbReference type="HOGENOM" id="CLU_661690_0_0_12"/>
<dbReference type="OrthoDB" id="350148at2"/>
<dbReference type="Proteomes" id="UP000001807">
    <property type="component" value="Plasmid cp26"/>
</dbReference>
<dbReference type="Gene3D" id="1.25.40.20">
    <property type="entry name" value="Ankyrin repeat-containing domain"/>
    <property type="match status" value="1"/>
</dbReference>
<dbReference type="InterPro" id="IPR002110">
    <property type="entry name" value="Ankyrin_rpt"/>
</dbReference>
<dbReference type="InterPro" id="IPR036770">
    <property type="entry name" value="Ankyrin_rpt-contain_sf"/>
</dbReference>
<dbReference type="Pfam" id="PF12796">
    <property type="entry name" value="Ank_2"/>
    <property type="match status" value="1"/>
</dbReference>
<dbReference type="SMART" id="SM00248">
    <property type="entry name" value="ANK"/>
    <property type="match status" value="2"/>
</dbReference>
<dbReference type="SUPFAM" id="SSF48403">
    <property type="entry name" value="Ankyrin repeat"/>
    <property type="match status" value="1"/>
</dbReference>
<dbReference type="PROSITE" id="PS50297">
    <property type="entry name" value="ANK_REP_REGION"/>
    <property type="match status" value="1"/>
</dbReference>
<dbReference type="PROSITE" id="PS50088">
    <property type="entry name" value="ANK_REPEAT"/>
    <property type="match status" value="1"/>
</dbReference>
<feature type="chain" id="PRO_0000067236" description="Putative ankyrin repeat protein BB_B28">
    <location>
        <begin position="1"/>
        <end position="414"/>
    </location>
</feature>
<feature type="repeat" description="ANK 1">
    <location>
        <begin position="326"/>
        <end position="355"/>
    </location>
</feature>
<feature type="repeat" description="ANK 2">
    <location>
        <begin position="359"/>
        <end position="389"/>
    </location>
</feature>
<accession>O50999</accession>
<geneLocation type="plasmid">
    <name>cp26</name>
    <name>circular 26 kb</name>
</geneLocation>
<protein>
    <recommendedName>
        <fullName>Putative ankyrin repeat protein BB_B28</fullName>
    </recommendedName>
</protein>
<proteinExistence type="predicted"/>
<organism>
    <name type="scientific">Borreliella burgdorferi (strain ATCC 35210 / DSM 4680 / CIP 102532 / B31)</name>
    <name type="common">Borrelia burgdorferi</name>
    <dbReference type="NCBI Taxonomy" id="224326"/>
    <lineage>
        <taxon>Bacteria</taxon>
        <taxon>Pseudomonadati</taxon>
        <taxon>Spirochaetota</taxon>
        <taxon>Spirochaetia</taxon>
        <taxon>Spirochaetales</taxon>
        <taxon>Borreliaceae</taxon>
        <taxon>Borreliella</taxon>
    </lineage>
</organism>
<keyword id="KW-0040">ANK repeat</keyword>
<keyword id="KW-0614">Plasmid</keyword>
<keyword id="KW-1185">Reference proteome</keyword>
<keyword id="KW-0677">Repeat</keyword>
<sequence length="414" mass="49380">MSYYVLSKIFLYSGYLVIGFLSFTIFNKNLRNKIRDKLKNLYFLYYLTFFTLFIISSNLSYYFTEKQLLEDFNIFEKEFFEIHKINEQFFQKYLLNFPVPIRMELMSKFDPLYTVFNASFEKYAKNIGKSSYEIQTNYKNYIRTTNSEIKEKLEQIKENITPIYNKYKLPILNGENTEISIDENGNIIPVIKNTNGQITELLFYDQNYNLIPFKKFESYKVRFDLIPENKNINFKELINVYYLDEKNIITPIEYYKNNIDMSPYYIDLQENKDDFLKAIKIKKEYGLYIEKKKQLQNLTENDKLDDFKEFLLKNNNIFSLNTIFSNGNPIFTYAINVKAKSIINYLITKEFNINLTNQNSQTALHSAIIQKYDLNFIKSLIEKGANPNIRDGDNKLPIDYSDKTSEIYKYLIGI</sequence>
<gene>
    <name type="ordered locus">BB_B28</name>
</gene>
<reference key="1">
    <citation type="journal article" date="1997" name="Nature">
        <title>Genomic sequence of a Lyme disease spirochaete, Borrelia burgdorferi.</title>
        <authorList>
            <person name="Fraser C.M."/>
            <person name="Casjens S."/>
            <person name="Huang W.M."/>
            <person name="Sutton G.G."/>
            <person name="Clayton R.A."/>
            <person name="Lathigra R."/>
            <person name="White O."/>
            <person name="Ketchum K.A."/>
            <person name="Dodson R.J."/>
            <person name="Hickey E.K."/>
            <person name="Gwinn M.L."/>
            <person name="Dougherty B.A."/>
            <person name="Tomb J.-F."/>
            <person name="Fleischmann R.D."/>
            <person name="Richardson D.L."/>
            <person name="Peterson J.D."/>
            <person name="Kerlavage A.R."/>
            <person name="Quackenbush J."/>
            <person name="Salzberg S.L."/>
            <person name="Hanson M."/>
            <person name="van Vugt R."/>
            <person name="Palmer N."/>
            <person name="Adams M.D."/>
            <person name="Gocayne J.D."/>
            <person name="Weidman J.F."/>
            <person name="Utterback T.R."/>
            <person name="Watthey L."/>
            <person name="McDonald L.A."/>
            <person name="Artiach P."/>
            <person name="Bowman C."/>
            <person name="Garland S.A."/>
            <person name="Fujii C."/>
            <person name="Cotton M.D."/>
            <person name="Horst K."/>
            <person name="Roberts K.M."/>
            <person name="Hatch B."/>
            <person name="Smith H.O."/>
            <person name="Venter J.C."/>
        </authorList>
    </citation>
    <scope>NUCLEOTIDE SEQUENCE [LARGE SCALE GENOMIC DNA]</scope>
    <source>
        <strain>ATCC 35210 / DSM 4680 / CIP 102532 / B31</strain>
    </source>
</reference>
<name>Y2628_BORBU</name>